<dbReference type="EC" id="2.5.1.-" evidence="4"/>
<dbReference type="EMBL" id="DS027692">
    <property type="protein sequence ID" value="EAW20699.1"/>
    <property type="molecule type" value="Genomic_DNA"/>
</dbReference>
<dbReference type="RefSeq" id="XP_001262596.1">
    <property type="nucleotide sequence ID" value="XM_001262595.1"/>
</dbReference>
<dbReference type="SMR" id="A1D8I8"/>
<dbReference type="STRING" id="331117.A1D8I8"/>
<dbReference type="EnsemblFungi" id="EAW20699">
    <property type="protein sequence ID" value="EAW20699"/>
    <property type="gene ID" value="NFIA_112230"/>
</dbReference>
<dbReference type="GeneID" id="4589232"/>
<dbReference type="KEGG" id="nfi:NFIA_112230"/>
<dbReference type="VEuPathDB" id="FungiDB:NFIA_112230"/>
<dbReference type="eggNOG" id="ENOG502S2XP">
    <property type="taxonomic scope" value="Eukaryota"/>
</dbReference>
<dbReference type="HOGENOM" id="CLU_037431_2_2_1"/>
<dbReference type="OMA" id="TGIDCCK"/>
<dbReference type="OrthoDB" id="3354387at2759"/>
<dbReference type="Proteomes" id="UP000006702">
    <property type="component" value="Unassembled WGS sequence"/>
</dbReference>
<dbReference type="GO" id="GO:0004659">
    <property type="term" value="F:prenyltransferase activity"/>
    <property type="evidence" value="ECO:0007669"/>
    <property type="project" value="TreeGrafter"/>
</dbReference>
<dbReference type="GO" id="GO:0009820">
    <property type="term" value="P:alkaloid metabolic process"/>
    <property type="evidence" value="ECO:0007669"/>
    <property type="project" value="InterPro"/>
</dbReference>
<dbReference type="CDD" id="cd13929">
    <property type="entry name" value="PT-DMATS_CymD"/>
    <property type="match status" value="1"/>
</dbReference>
<dbReference type="InterPro" id="IPR033964">
    <property type="entry name" value="Aro_prenylTrfase"/>
</dbReference>
<dbReference type="InterPro" id="IPR017795">
    <property type="entry name" value="Aro_prenylTrfase_DMATS"/>
</dbReference>
<dbReference type="InterPro" id="IPR012148">
    <property type="entry name" value="DMATS-type_fun"/>
</dbReference>
<dbReference type="NCBIfam" id="TIGR03429">
    <property type="entry name" value="arom_pren_DMATS"/>
    <property type="match status" value="1"/>
</dbReference>
<dbReference type="PANTHER" id="PTHR40627">
    <property type="entry name" value="INDOLE PRENYLTRANSFERASE TDIB-RELATED"/>
    <property type="match status" value="1"/>
</dbReference>
<dbReference type="PANTHER" id="PTHR40627:SF4">
    <property type="entry name" value="PRENYLTRANSFERASE ASQH1-RELATED"/>
    <property type="match status" value="1"/>
</dbReference>
<dbReference type="Pfam" id="PF11991">
    <property type="entry name" value="Trp_DMAT"/>
    <property type="match status" value="1"/>
</dbReference>
<dbReference type="PIRSF" id="PIRSF000509">
    <property type="entry name" value="Trp_DMAT"/>
    <property type="match status" value="1"/>
</dbReference>
<dbReference type="SFLD" id="SFLDS00036">
    <property type="entry name" value="Aromatic_Prenyltransferase"/>
    <property type="match status" value="1"/>
</dbReference>
<accession>A1D8I8</accession>
<comment type="function">
    <text evidence="1 5">Prenyltransferase; part of the gene cluster that mediates the biosynthesis of neosartoricin, a prenylated anthracenone that exhibits T-cell antiproliferative activity, suggestive of a physiological role as an immunosuppressive agent (PubMed:23368997, PubMed:23758576). The non-reducing polyketide synthase nscA probably synthesizes and cyclizes the decaketide backbone (PubMed:23368997). The hydrolase nscB then mediates the product release through hydrolysis followed by spontaneous decarboxylation (PubMed:23368997). The prenyltransferase nscD catalyzes the addition of the dimethylallyl group to the aromatic C5 (PubMed:23368997). The FAD-dependent monooxygenase nscC is then responsible for the stereospecific hydroxylation at C2 (PubMed:23368997). There is no gene encoding O-acetyltransferase in the nsc gene cluster; thus, the last step of 2-O-acetylation leading to neosartoricin may be catalyzed by an unidentified O-acetyltransferase (PubMed:23368997).</text>
</comment>
<comment type="pathway">
    <text evidence="1">Secondary metabolite biosynthesis.</text>
</comment>
<comment type="similarity">
    <text evidence="3">Belongs to the tryptophan dimethylallyltransferase family.</text>
</comment>
<organism>
    <name type="scientific">Neosartorya fischeri (strain ATCC 1020 / DSM 3700 / CBS 544.65 / FGSC A1164 / JCM 1740 / NRRL 181 / WB 181)</name>
    <name type="common">Aspergillus fischerianus</name>
    <dbReference type="NCBI Taxonomy" id="331117"/>
    <lineage>
        <taxon>Eukaryota</taxon>
        <taxon>Fungi</taxon>
        <taxon>Dikarya</taxon>
        <taxon>Ascomycota</taxon>
        <taxon>Pezizomycotina</taxon>
        <taxon>Eurotiomycetes</taxon>
        <taxon>Eurotiomycetidae</taxon>
        <taxon>Eurotiales</taxon>
        <taxon>Aspergillaceae</taxon>
        <taxon>Aspergillus</taxon>
        <taxon>Aspergillus subgen. Fumigati</taxon>
    </lineage>
</organism>
<reference key="1">
    <citation type="journal article" date="2008" name="PLoS Genet.">
        <title>Genomic islands in the pathogenic filamentous fungus Aspergillus fumigatus.</title>
        <authorList>
            <person name="Fedorova N.D."/>
            <person name="Khaldi N."/>
            <person name="Joardar V.S."/>
            <person name="Maiti R."/>
            <person name="Amedeo P."/>
            <person name="Anderson M.J."/>
            <person name="Crabtree J."/>
            <person name="Silva J.C."/>
            <person name="Badger J.H."/>
            <person name="Albarraq A."/>
            <person name="Angiuoli S."/>
            <person name="Bussey H."/>
            <person name="Bowyer P."/>
            <person name="Cotty P.J."/>
            <person name="Dyer P.S."/>
            <person name="Egan A."/>
            <person name="Galens K."/>
            <person name="Fraser-Liggett C.M."/>
            <person name="Haas B.J."/>
            <person name="Inman J.M."/>
            <person name="Kent R."/>
            <person name="Lemieux S."/>
            <person name="Malavazi I."/>
            <person name="Orvis J."/>
            <person name="Roemer T."/>
            <person name="Ronning C.M."/>
            <person name="Sundaram J.P."/>
            <person name="Sutton G."/>
            <person name="Turner G."/>
            <person name="Venter J.C."/>
            <person name="White O.R."/>
            <person name="Whitty B.R."/>
            <person name="Youngman P."/>
            <person name="Wolfe K.H."/>
            <person name="Goldman G.H."/>
            <person name="Wortman J.R."/>
            <person name="Jiang B."/>
            <person name="Denning D.W."/>
            <person name="Nierman W.C."/>
        </authorList>
    </citation>
    <scope>NUCLEOTIDE SEQUENCE [LARGE SCALE GENOMIC DNA]</scope>
    <source>
        <strain>ATCC 1020 / DSM 3700 / CBS 544.65 / FGSC A1164 / JCM 1740 / NRRL 181 / WB 181</strain>
    </source>
</reference>
<reference key="2">
    <citation type="journal article" date="2013" name="ACS Synth. Biol.">
        <title>Discovery of cryptic polyketide metabolites from dermatophytes using heterologous expression in Aspergillus nidulans.</title>
        <authorList>
            <person name="Yin W.B."/>
            <person name="Chooi Y.H."/>
            <person name="Smith A.R."/>
            <person name="Cacho R.A."/>
            <person name="Hu Y."/>
            <person name="White T.C."/>
            <person name="Tang Y."/>
        </authorList>
    </citation>
    <scope>FUNCTION</scope>
</reference>
<reference key="3">
    <citation type="journal article" date="2013" name="Org. Lett.">
        <title>Genome mining of a prenylated and immunosuppressive polyketide from pathogenic fungi.</title>
        <authorList>
            <person name="Chooi Y.H."/>
            <person name="Fang J."/>
            <person name="Liu H."/>
            <person name="Filler S.G."/>
            <person name="Wang P."/>
            <person name="Tang Y."/>
        </authorList>
    </citation>
    <scope>FUNCTION</scope>
</reference>
<keyword id="KW-1185">Reference proteome</keyword>
<keyword id="KW-0808">Transferase</keyword>
<protein>
    <recommendedName>
        <fullName evidence="2">Prenyltransferase nscD</fullName>
        <ecNumber evidence="4">2.5.1.-</ecNumber>
    </recommendedName>
    <alternativeName>
        <fullName evidence="2">Neosartoricin biosynthesis protein D</fullName>
    </alternativeName>
</protein>
<feature type="chain" id="PRO_0000437915" description="Prenyltransferase nscD">
    <location>
        <begin position="1"/>
        <end position="454"/>
    </location>
</feature>
<name>NSCD_NEOFI</name>
<evidence type="ECO:0000269" key="1">
    <source>
    </source>
</evidence>
<evidence type="ECO:0000303" key="2">
    <source>
    </source>
</evidence>
<evidence type="ECO:0000305" key="3"/>
<evidence type="ECO:0000305" key="4">
    <source>
    </source>
</evidence>
<evidence type="ECO:0000305" key="5">
    <source>
    </source>
</evidence>
<gene>
    <name evidence="2" type="primary">nscD</name>
    <name type="ORF">NFIA_112230</name>
</gene>
<proteinExistence type="inferred from homology"/>
<sequence length="454" mass="50940">MSPLQLNGKSRGTSPGNAEPLPIFDALCRSLPVGTADEQFWWKLTGRHLARMMLEAGYPEHRQVECLLFHRFKVVPTFGPQPQSAEPWYRSRVAASAGDGAPISYSWRFGTADRKPYIRNYIEPLGPLTGTAADPNNDVATRAFLQDLTTTLPNLDLSLFWTFEPHLVSRFSDKADREKYAGPSVLTGVELSPDSDAIEIKMYLYPRIPEQISQLLSTIIPKAMREAYGDDVCLDSLNLVKDFLSNHPDGRQLSPRGTTGIDCCKVQDSRVKFYVATNNTSFDHIATVMTIGGRRPLSTEVLDKLRELWYELNGLPSDFPTSEQVPTDQGQEGPSGHHGVGFYYDIQPRLALPDVKAFINVRKHAKSDLAAAETVIGFLERHGQGHHNPRAYLNVLRDIVPAEELETRVGAQAFYSVAVKKEELDITAYFIPQVYRRFASVQVELNGQRRSRFE</sequence>